<name>PUR9_SORC5</name>
<protein>
    <recommendedName>
        <fullName evidence="1">Bifunctional purine biosynthesis protein PurH</fullName>
    </recommendedName>
    <domain>
        <recommendedName>
            <fullName evidence="1">Phosphoribosylaminoimidazolecarboxamide formyltransferase</fullName>
            <ecNumber evidence="1">2.1.2.3</ecNumber>
        </recommendedName>
        <alternativeName>
            <fullName evidence="1">AICAR transformylase</fullName>
        </alternativeName>
    </domain>
    <domain>
        <recommendedName>
            <fullName evidence="1">IMP cyclohydrolase</fullName>
            <ecNumber evidence="1">3.5.4.10</ecNumber>
        </recommendedName>
        <alternativeName>
            <fullName evidence="1">ATIC</fullName>
        </alternativeName>
        <alternativeName>
            <fullName evidence="1">IMP synthase</fullName>
        </alternativeName>
        <alternativeName>
            <fullName evidence="1">Inosinicase</fullName>
        </alternativeName>
    </domain>
</protein>
<evidence type="ECO:0000255" key="1">
    <source>
        <dbReference type="HAMAP-Rule" id="MF_00139"/>
    </source>
</evidence>
<evidence type="ECO:0000255" key="2">
    <source>
        <dbReference type="PROSITE-ProRule" id="PRU01202"/>
    </source>
</evidence>
<gene>
    <name evidence="1" type="primary">purH</name>
    <name type="ordered locus">sce3150</name>
</gene>
<accession>A9GIT1</accession>
<comment type="catalytic activity">
    <reaction evidence="1">
        <text>(6R)-10-formyltetrahydrofolate + 5-amino-1-(5-phospho-beta-D-ribosyl)imidazole-4-carboxamide = 5-formamido-1-(5-phospho-D-ribosyl)imidazole-4-carboxamide + (6S)-5,6,7,8-tetrahydrofolate</text>
        <dbReference type="Rhea" id="RHEA:22192"/>
        <dbReference type="ChEBI" id="CHEBI:57453"/>
        <dbReference type="ChEBI" id="CHEBI:58467"/>
        <dbReference type="ChEBI" id="CHEBI:58475"/>
        <dbReference type="ChEBI" id="CHEBI:195366"/>
        <dbReference type="EC" id="2.1.2.3"/>
    </reaction>
</comment>
<comment type="catalytic activity">
    <reaction evidence="1">
        <text>IMP + H2O = 5-formamido-1-(5-phospho-D-ribosyl)imidazole-4-carboxamide</text>
        <dbReference type="Rhea" id="RHEA:18445"/>
        <dbReference type="ChEBI" id="CHEBI:15377"/>
        <dbReference type="ChEBI" id="CHEBI:58053"/>
        <dbReference type="ChEBI" id="CHEBI:58467"/>
        <dbReference type="EC" id="3.5.4.10"/>
    </reaction>
</comment>
<comment type="pathway">
    <text evidence="1">Purine metabolism; IMP biosynthesis via de novo pathway; 5-formamido-1-(5-phospho-D-ribosyl)imidazole-4-carboxamide from 5-amino-1-(5-phospho-D-ribosyl)imidazole-4-carboxamide (10-formyl THF route): step 1/1.</text>
</comment>
<comment type="pathway">
    <text evidence="1">Purine metabolism; IMP biosynthesis via de novo pathway; IMP from 5-formamido-1-(5-phospho-D-ribosyl)imidazole-4-carboxamide: step 1/1.</text>
</comment>
<comment type="domain">
    <text evidence="1">The IMP cyclohydrolase activity resides in the N-terminal region.</text>
</comment>
<comment type="similarity">
    <text evidence="1">Belongs to the PurH family.</text>
</comment>
<organism>
    <name type="scientific">Sorangium cellulosum (strain So ce56)</name>
    <name type="common">Polyangium cellulosum (strain So ce56)</name>
    <dbReference type="NCBI Taxonomy" id="448385"/>
    <lineage>
        <taxon>Bacteria</taxon>
        <taxon>Pseudomonadati</taxon>
        <taxon>Myxococcota</taxon>
        <taxon>Polyangia</taxon>
        <taxon>Polyangiales</taxon>
        <taxon>Polyangiaceae</taxon>
        <taxon>Sorangium</taxon>
    </lineage>
</organism>
<feature type="chain" id="PRO_1000076496" description="Bifunctional purine biosynthesis protein PurH">
    <location>
        <begin position="1"/>
        <end position="522"/>
    </location>
</feature>
<feature type="domain" description="MGS-like" evidence="2">
    <location>
        <begin position="1"/>
        <end position="143"/>
    </location>
</feature>
<dbReference type="EC" id="2.1.2.3" evidence="1"/>
<dbReference type="EC" id="3.5.4.10" evidence="1"/>
<dbReference type="EMBL" id="AM746676">
    <property type="protein sequence ID" value="CAN93309.1"/>
    <property type="molecule type" value="Genomic_DNA"/>
</dbReference>
<dbReference type="RefSeq" id="WP_012235781.1">
    <property type="nucleotide sequence ID" value="NC_010162.1"/>
</dbReference>
<dbReference type="SMR" id="A9GIT1"/>
<dbReference type="STRING" id="448385.sce3150"/>
<dbReference type="KEGG" id="scl:sce3150"/>
<dbReference type="eggNOG" id="COG0138">
    <property type="taxonomic scope" value="Bacteria"/>
</dbReference>
<dbReference type="HOGENOM" id="CLU_016316_5_2_7"/>
<dbReference type="OrthoDB" id="9802065at2"/>
<dbReference type="BioCyc" id="SCEL448385:SCE_RS16140-MONOMER"/>
<dbReference type="UniPathway" id="UPA00074">
    <property type="reaction ID" value="UER00133"/>
</dbReference>
<dbReference type="UniPathway" id="UPA00074">
    <property type="reaction ID" value="UER00135"/>
</dbReference>
<dbReference type="Proteomes" id="UP000002139">
    <property type="component" value="Chromosome"/>
</dbReference>
<dbReference type="GO" id="GO:0005829">
    <property type="term" value="C:cytosol"/>
    <property type="evidence" value="ECO:0007669"/>
    <property type="project" value="TreeGrafter"/>
</dbReference>
<dbReference type="GO" id="GO:0003937">
    <property type="term" value="F:IMP cyclohydrolase activity"/>
    <property type="evidence" value="ECO:0007669"/>
    <property type="project" value="UniProtKB-UniRule"/>
</dbReference>
<dbReference type="GO" id="GO:0004643">
    <property type="term" value="F:phosphoribosylaminoimidazolecarboxamide formyltransferase activity"/>
    <property type="evidence" value="ECO:0007669"/>
    <property type="project" value="UniProtKB-UniRule"/>
</dbReference>
<dbReference type="GO" id="GO:0006189">
    <property type="term" value="P:'de novo' IMP biosynthetic process"/>
    <property type="evidence" value="ECO:0007669"/>
    <property type="project" value="UniProtKB-UniRule"/>
</dbReference>
<dbReference type="CDD" id="cd01421">
    <property type="entry name" value="IMPCH"/>
    <property type="match status" value="1"/>
</dbReference>
<dbReference type="FunFam" id="3.40.140.20:FF:000001">
    <property type="entry name" value="Bifunctional purine biosynthesis protein PurH"/>
    <property type="match status" value="1"/>
</dbReference>
<dbReference type="FunFam" id="3.40.50.1380:FF:000001">
    <property type="entry name" value="Bifunctional purine biosynthesis protein PurH"/>
    <property type="match status" value="1"/>
</dbReference>
<dbReference type="Gene3D" id="3.40.140.20">
    <property type="match status" value="2"/>
</dbReference>
<dbReference type="Gene3D" id="3.40.50.1380">
    <property type="entry name" value="Methylglyoxal synthase-like domain"/>
    <property type="match status" value="1"/>
</dbReference>
<dbReference type="HAMAP" id="MF_00139">
    <property type="entry name" value="PurH"/>
    <property type="match status" value="1"/>
</dbReference>
<dbReference type="InterPro" id="IPR024051">
    <property type="entry name" value="AICAR_Tfase_dup_dom_sf"/>
</dbReference>
<dbReference type="InterPro" id="IPR016193">
    <property type="entry name" value="Cytidine_deaminase-like"/>
</dbReference>
<dbReference type="InterPro" id="IPR011607">
    <property type="entry name" value="MGS-like_dom"/>
</dbReference>
<dbReference type="InterPro" id="IPR036914">
    <property type="entry name" value="MGS-like_dom_sf"/>
</dbReference>
<dbReference type="InterPro" id="IPR002695">
    <property type="entry name" value="PurH-like"/>
</dbReference>
<dbReference type="NCBIfam" id="NF002049">
    <property type="entry name" value="PRK00881.1"/>
    <property type="match status" value="1"/>
</dbReference>
<dbReference type="NCBIfam" id="TIGR00355">
    <property type="entry name" value="purH"/>
    <property type="match status" value="1"/>
</dbReference>
<dbReference type="PANTHER" id="PTHR11692:SF0">
    <property type="entry name" value="BIFUNCTIONAL PURINE BIOSYNTHESIS PROTEIN ATIC"/>
    <property type="match status" value="1"/>
</dbReference>
<dbReference type="PANTHER" id="PTHR11692">
    <property type="entry name" value="BIFUNCTIONAL PURINE BIOSYNTHESIS PROTEIN PURH"/>
    <property type="match status" value="1"/>
</dbReference>
<dbReference type="Pfam" id="PF01808">
    <property type="entry name" value="AICARFT_IMPCHas"/>
    <property type="match status" value="1"/>
</dbReference>
<dbReference type="Pfam" id="PF02142">
    <property type="entry name" value="MGS"/>
    <property type="match status" value="1"/>
</dbReference>
<dbReference type="PIRSF" id="PIRSF000414">
    <property type="entry name" value="AICARFT_IMPCHas"/>
    <property type="match status" value="1"/>
</dbReference>
<dbReference type="SMART" id="SM00798">
    <property type="entry name" value="AICARFT_IMPCHas"/>
    <property type="match status" value="1"/>
</dbReference>
<dbReference type="SMART" id="SM00851">
    <property type="entry name" value="MGS"/>
    <property type="match status" value="1"/>
</dbReference>
<dbReference type="SUPFAM" id="SSF53927">
    <property type="entry name" value="Cytidine deaminase-like"/>
    <property type="match status" value="1"/>
</dbReference>
<dbReference type="SUPFAM" id="SSF52335">
    <property type="entry name" value="Methylglyoxal synthase-like"/>
    <property type="match status" value="1"/>
</dbReference>
<dbReference type="PROSITE" id="PS51855">
    <property type="entry name" value="MGS"/>
    <property type="match status" value="1"/>
</dbReference>
<keyword id="KW-0378">Hydrolase</keyword>
<keyword id="KW-0511">Multifunctional enzyme</keyword>
<keyword id="KW-0658">Purine biosynthesis</keyword>
<keyword id="KW-1185">Reference proteome</keyword>
<keyword id="KW-0808">Transferase</keyword>
<reference key="1">
    <citation type="journal article" date="2007" name="Nat. Biotechnol.">
        <title>Complete genome sequence of the myxobacterium Sorangium cellulosum.</title>
        <authorList>
            <person name="Schneiker S."/>
            <person name="Perlova O."/>
            <person name="Kaiser O."/>
            <person name="Gerth K."/>
            <person name="Alici A."/>
            <person name="Altmeyer M.O."/>
            <person name="Bartels D."/>
            <person name="Bekel T."/>
            <person name="Beyer S."/>
            <person name="Bode E."/>
            <person name="Bode H.B."/>
            <person name="Bolten C.J."/>
            <person name="Choudhuri J.V."/>
            <person name="Doss S."/>
            <person name="Elnakady Y.A."/>
            <person name="Frank B."/>
            <person name="Gaigalat L."/>
            <person name="Goesmann A."/>
            <person name="Groeger C."/>
            <person name="Gross F."/>
            <person name="Jelsbak L."/>
            <person name="Jelsbak L."/>
            <person name="Kalinowski J."/>
            <person name="Kegler C."/>
            <person name="Knauber T."/>
            <person name="Konietzny S."/>
            <person name="Kopp M."/>
            <person name="Krause L."/>
            <person name="Krug D."/>
            <person name="Linke B."/>
            <person name="Mahmud T."/>
            <person name="Martinez-Arias R."/>
            <person name="McHardy A.C."/>
            <person name="Merai M."/>
            <person name="Meyer F."/>
            <person name="Mormann S."/>
            <person name="Munoz-Dorado J."/>
            <person name="Perez J."/>
            <person name="Pradella S."/>
            <person name="Rachid S."/>
            <person name="Raddatz G."/>
            <person name="Rosenau F."/>
            <person name="Rueckert C."/>
            <person name="Sasse F."/>
            <person name="Scharfe M."/>
            <person name="Schuster S.C."/>
            <person name="Suen G."/>
            <person name="Treuner-Lange A."/>
            <person name="Velicer G.J."/>
            <person name="Vorholter F.-J."/>
            <person name="Weissman K.J."/>
            <person name="Welch R.D."/>
            <person name="Wenzel S.C."/>
            <person name="Whitworth D.E."/>
            <person name="Wilhelm S."/>
            <person name="Wittmann C."/>
            <person name="Bloecker H."/>
            <person name="Puehler A."/>
            <person name="Mueller R."/>
        </authorList>
    </citation>
    <scope>NUCLEOTIDE SEQUENCE [LARGE SCALE GENOMIC DNA]</scope>
    <source>
        <strain>So ce56</strain>
    </source>
</reference>
<proteinExistence type="inferred from homology"/>
<sequence>MIRRALISVSDKTGLLPLARRLAEKGVEILSTGGTQRALADAGVPVIGVEAYTGSPEVMDGRVKTLHPRVHGGILMRGAIDDEDLARLGGAPIDLVVCNLYPFEATVRKPGVTHPEIIENIDIGGPSMVRSAAKNHARVAVVVDPADYDAVLAEIDRQGEVSSATRRRLATKAFAHTAAYDGMVSGYLSSLPEEGEPSAAEREAYPRFLTLALERAYPLRYGENPHQSGAFYRERGAAAGSLALAESLGAGGKELSFNNLVDVDAAFEAVREFTQPAAVVVKHTNPCGVATGDSLAAAYRTARDADAVSAFGGIVALNREVDRAAAEVLVETFLECVVAPAYTPDALEVLRTKKNLRLLATGALLPADHRELTFKRVGGGLVVQERDASAAGEVRGGRVVAKRAPTEEEIEALDLGWRVCKHVKSNAIVLAIPGRTVGIGAGQMSRVESVRIACSKAGERARGSVLASDAFFPFPDNVVLAAEHGITAVAQPGGSVKDAEVIAAADAAGIAMVFTGARHFRH</sequence>